<protein>
    <recommendedName>
        <fullName>Trypsin inhibitor MCI-3</fullName>
    </recommendedName>
</protein>
<reference key="1">
    <citation type="journal article" date="1988" name="FEBS Lett.">
        <title>The amino acid sequence of a trypsin inhibitor from the seeds of Momordica charantia Linn. Cucurbitaceae.</title>
        <authorList>
            <person name="Zeng F.-Y."/>
            <person name="Qian R.-Q."/>
            <person name="Wang Y."/>
        </authorList>
    </citation>
    <scope>PROTEIN SEQUENCE</scope>
    <source>
        <tissue>Seed</tissue>
    </source>
</reference>
<accession>P09407</accession>
<name>ITI3_MOMCH</name>
<evidence type="ECO:0000305" key="1"/>
<comment type="similarity">
    <text evidence="1">Belongs to the protease inhibitor I13 (potato type I serine protease inhibitor) family.</text>
</comment>
<organism>
    <name type="scientific">Momordica charantia</name>
    <name type="common">Bitter gourd</name>
    <name type="synonym">Balsam pear</name>
    <dbReference type="NCBI Taxonomy" id="3673"/>
    <lineage>
        <taxon>Eukaryota</taxon>
        <taxon>Viridiplantae</taxon>
        <taxon>Streptophyta</taxon>
        <taxon>Embryophyta</taxon>
        <taxon>Tracheophyta</taxon>
        <taxon>Spermatophyta</taxon>
        <taxon>Magnoliopsida</taxon>
        <taxon>eudicotyledons</taxon>
        <taxon>Gunneridae</taxon>
        <taxon>Pentapetalae</taxon>
        <taxon>rosids</taxon>
        <taxon>fabids</taxon>
        <taxon>Cucurbitales</taxon>
        <taxon>Cucurbitaceae</taxon>
        <taxon>Momordiceae</taxon>
        <taxon>Momordica</taxon>
    </lineage>
</organism>
<proteinExistence type="evidence at protein level"/>
<keyword id="KW-0903">Direct protein sequencing</keyword>
<keyword id="KW-0646">Protease inhibitor</keyword>
<keyword id="KW-1185">Reference proteome</keyword>
<keyword id="KW-0722">Serine protease inhibitor</keyword>
<dbReference type="PIR" id="S01004">
    <property type="entry name" value="S01004"/>
</dbReference>
<dbReference type="MEROPS" id="I13.004"/>
<dbReference type="Proteomes" id="UP000504603">
    <property type="component" value="Unplaced"/>
</dbReference>
<dbReference type="GO" id="GO:0004867">
    <property type="term" value="F:serine-type endopeptidase inhibitor activity"/>
    <property type="evidence" value="ECO:0007669"/>
    <property type="project" value="UniProtKB-KW"/>
</dbReference>
<dbReference type="InterPro" id="IPR036354">
    <property type="entry name" value="Prot_inh_pot1_sf"/>
</dbReference>
<dbReference type="SUPFAM" id="SSF54654">
    <property type="entry name" value="CI-2 family of serine protease inhibitors"/>
    <property type="match status" value="1"/>
</dbReference>
<sequence length="62" mass="6496">TRZGVREDPSVRAIVISVGSGATKDKVGSTGAAAKALVERENPRVRAWVTERGIVARPPTIG</sequence>
<feature type="chain" id="PRO_0000217656" description="Trypsin inhibitor MCI-3">
    <location>
        <begin position="1"/>
        <end position="62"/>
    </location>
</feature>